<protein>
    <recommendedName>
        <fullName>Peroxisomal biogenesis factor 3</fullName>
    </recommendedName>
    <alternativeName>
        <fullName>Peroxin-3</fullName>
    </alternativeName>
    <alternativeName>
        <fullName>Peroxisomal assembly protein PEX3</fullName>
    </alternativeName>
</protein>
<sequence>MLRSMWNFLKRHKKKCIFLGTVLGGVYILGKYGQKKIREIQEREAAEYIAQARRQYHFESNQRTCNMTVLSMLPTLREALMQQLNSESLTALLKNRPSNKLEIWEDLKIISFTRSIVAVYSTCMLVVLLRVQLNIIGGYIYLDNATVGKNGTTVLAPPDVQQQYLSSIQHLLGDGLTELVTVIKQAVQRILGSVSLKHSLSLLDLEQKLKEIRILVEQHRSPSWIDKDVSKSSLCQYMMPDEETPLAAQAYGLSPRDITTIKLLNETRDMLESPDFSTVLNTCLNRGFSRLLDNMAEFFRPTEQDLQHGNSINSLSSVSLPLAKIIPIVNGQIHSVCSDTPSHFVQDLLMMEQVKDFAANVYEAFSTPQQLEK</sequence>
<feature type="chain" id="PRO_0000208736" description="Peroxisomal biogenesis factor 3">
    <location>
        <begin position="1"/>
        <end position="373"/>
    </location>
</feature>
<feature type="topological domain" description="Cytoplasmic" evidence="2">
    <location>
        <begin position="1"/>
        <end position="15"/>
    </location>
</feature>
<feature type="transmembrane region" description="Helical" evidence="2">
    <location>
        <begin position="16"/>
        <end position="36"/>
    </location>
</feature>
<feature type="topological domain" description="Peroxisomal" evidence="2">
    <location>
        <begin position="37"/>
        <end position="116"/>
    </location>
</feature>
<feature type="transmembrane region" description="Helical" evidence="2">
    <location>
        <begin position="117"/>
        <end position="140"/>
    </location>
</feature>
<feature type="topological domain" description="Cytoplasmic" evidence="2">
    <location>
        <begin position="141"/>
        <end position="373"/>
    </location>
</feature>
<feature type="region of interest" description="Targeting to peroxisomes" evidence="1">
    <location>
        <begin position="1"/>
        <end position="45"/>
    </location>
</feature>
<feature type="region of interest" description="Interaction with PEX19" evidence="1">
    <location>
        <begin position="120"/>
        <end position="136"/>
    </location>
</feature>
<gene>
    <name type="primary">PEX3</name>
</gene>
<accession>Q9JJK3</accession>
<organism>
    <name type="scientific">Cricetulus longicaudatus</name>
    <name type="common">Long-tailed dwarf hamster</name>
    <dbReference type="NCBI Taxonomy" id="10030"/>
    <lineage>
        <taxon>Eukaryota</taxon>
        <taxon>Metazoa</taxon>
        <taxon>Chordata</taxon>
        <taxon>Craniata</taxon>
        <taxon>Vertebrata</taxon>
        <taxon>Euteleostomi</taxon>
        <taxon>Mammalia</taxon>
        <taxon>Eutheria</taxon>
        <taxon>Euarchontoglires</taxon>
        <taxon>Glires</taxon>
        <taxon>Rodentia</taxon>
        <taxon>Myomorpha</taxon>
        <taxon>Muroidea</taxon>
        <taxon>Cricetidae</taxon>
        <taxon>Cricetinae</taxon>
        <taxon>Cricetulus</taxon>
    </lineage>
</organism>
<evidence type="ECO:0000250" key="1">
    <source>
        <dbReference type="UniProtKB" id="P56589"/>
    </source>
</evidence>
<evidence type="ECO:0000255" key="2"/>
<evidence type="ECO:0000269" key="3">
    <source>
    </source>
</evidence>
<evidence type="ECO:0000305" key="4"/>
<proteinExistence type="evidence at transcript level"/>
<keyword id="KW-0472">Membrane</keyword>
<keyword id="KW-0576">Peroxisome</keyword>
<keyword id="KW-0962">Peroxisome biogenesis</keyword>
<keyword id="KW-0812">Transmembrane</keyword>
<keyword id="KW-1133">Transmembrane helix</keyword>
<name>PEX3_CRILO</name>
<reference key="1">
    <citation type="journal article" date="2000" name="Mol. Biol. Cell">
        <title>The peroxin pex3p initiates membrane assembly in peroxisome biogenesis.</title>
        <authorList>
            <person name="Ghaedi K."/>
            <person name="Tamura S."/>
            <person name="Okumoto K."/>
            <person name="Matsuzono Y."/>
            <person name="Fujiki Y."/>
        </authorList>
    </citation>
    <scope>NUCLEOTIDE SEQUENCE [MRNA]</scope>
    <scope>FUNCTION</scope>
    <scope>SUBCELLULAR LOCATION</scope>
</reference>
<dbReference type="EMBL" id="AB035308">
    <property type="protein sequence ID" value="BAA97994.1"/>
    <property type="molecule type" value="mRNA"/>
</dbReference>
<dbReference type="SMR" id="Q9JJK3"/>
<dbReference type="GO" id="GO:0005778">
    <property type="term" value="C:peroxisomal membrane"/>
    <property type="evidence" value="ECO:0000250"/>
    <property type="project" value="UniProtKB"/>
</dbReference>
<dbReference type="GO" id="GO:0005777">
    <property type="term" value="C:peroxisome"/>
    <property type="evidence" value="ECO:0000250"/>
    <property type="project" value="UniProtKB"/>
</dbReference>
<dbReference type="GO" id="GO:0030674">
    <property type="term" value="F:protein-macromolecule adaptor activity"/>
    <property type="evidence" value="ECO:0007669"/>
    <property type="project" value="TreeGrafter"/>
</dbReference>
<dbReference type="GO" id="GO:0007031">
    <property type="term" value="P:peroxisome organization"/>
    <property type="evidence" value="ECO:0000250"/>
    <property type="project" value="UniProtKB"/>
</dbReference>
<dbReference type="GO" id="GO:0045046">
    <property type="term" value="P:protein import into peroxisome membrane"/>
    <property type="evidence" value="ECO:0000250"/>
    <property type="project" value="UniProtKB"/>
</dbReference>
<dbReference type="InterPro" id="IPR006966">
    <property type="entry name" value="Peroxin-3"/>
</dbReference>
<dbReference type="PANTHER" id="PTHR28080">
    <property type="entry name" value="PEROXISOMAL BIOGENESIS FACTOR 3"/>
    <property type="match status" value="1"/>
</dbReference>
<dbReference type="PANTHER" id="PTHR28080:SF1">
    <property type="entry name" value="PEROXISOMAL BIOGENESIS FACTOR 3"/>
    <property type="match status" value="1"/>
</dbReference>
<dbReference type="Pfam" id="PF04882">
    <property type="entry name" value="Peroxin-3"/>
    <property type="match status" value="2"/>
</dbReference>
<comment type="function">
    <text evidence="3">Involved in peroxisome biosynthesis and integrity. Assembles membrane vesicles before the matrix proteins are translocated. As a docking factor for PEX19, is necessary for the import of peroxisomal membrane proteins in the peroxisomes.</text>
</comment>
<comment type="subunit">
    <text evidence="1">Interacts with PEX19.</text>
</comment>
<comment type="subcellular location">
    <subcellularLocation>
        <location evidence="3">Peroxisome membrane</location>
        <topology evidence="2">Multi-pass membrane protein</topology>
    </subcellularLocation>
</comment>
<comment type="similarity">
    <text evidence="4">Belongs to the peroxin-3 family.</text>
</comment>